<feature type="propeptide" id="PRO_0000004565" evidence="2">
    <location>
        <begin position="1"/>
        <end position="9"/>
    </location>
</feature>
<feature type="propeptide" id="PRO_0000004566" evidence="2">
    <location>
        <begin position="10"/>
        <end position="28"/>
    </location>
</feature>
<feature type="chain" id="PRO_0000004567" description="Caspase-3 subunit p17" evidence="2">
    <location>
        <begin position="29"/>
        <end position="175"/>
    </location>
</feature>
<feature type="chain" id="PRO_0000004568" description="Caspase-3 subunit p12" evidence="2">
    <location>
        <begin position="176"/>
        <end position="277"/>
    </location>
</feature>
<feature type="active site" evidence="1">
    <location>
        <position position="121"/>
    </location>
</feature>
<feature type="active site" evidence="1">
    <location>
        <position position="163"/>
    </location>
</feature>
<feature type="modified residue" description="N-acetylmethionine" evidence="2">
    <location>
        <position position="1"/>
    </location>
</feature>
<feature type="modified residue" description="N6-acetyllysine" evidence="3">
    <location>
        <position position="11"/>
    </location>
</feature>
<feature type="modified residue" description="Phosphoserine" evidence="2">
    <location>
        <position position="26"/>
    </location>
</feature>
<feature type="modified residue" description="S-nitrosocysteine; in inhibited form" evidence="2">
    <location>
        <position position="163"/>
    </location>
</feature>
<proteinExistence type="evidence at transcript level"/>
<sequence length="277" mass="31466">MENSENSVDAKSIKNSETKIFHGSKSMDSGIYMDNSYKMDYPEMGLCIIINNKNFHESTGMPSRSGTDVDAANLRETFTNLKYEVRNKNDLTREQIVALLDSVSREDHSKRSSFICVLLSHGEEGIIYGTNGPVDLKKLTGFFRGDYCRSLTGKPKLFIIQACRGTELDCGIETDSGTEDDIACQKIPVEADFLYAYSTAPGYYSWRNSKDGSWFIQSLCSMLRLYAHELEFMHILTRVNRKVATEFESFSLDSAFHGKKQIPCIVSMLTKELYFYH</sequence>
<name>CASP3_FELCA</name>
<organism>
    <name type="scientific">Felis catus</name>
    <name type="common">Cat</name>
    <name type="synonym">Felis silvestris catus</name>
    <dbReference type="NCBI Taxonomy" id="9685"/>
    <lineage>
        <taxon>Eukaryota</taxon>
        <taxon>Metazoa</taxon>
        <taxon>Chordata</taxon>
        <taxon>Craniata</taxon>
        <taxon>Vertebrata</taxon>
        <taxon>Euteleostomi</taxon>
        <taxon>Mammalia</taxon>
        <taxon>Eutheria</taxon>
        <taxon>Laurasiatheria</taxon>
        <taxon>Carnivora</taxon>
        <taxon>Feliformia</taxon>
        <taxon>Felidae</taxon>
        <taxon>Felinae</taxon>
        <taxon>Felis</taxon>
    </lineage>
</organism>
<keyword id="KW-0007">Acetylation</keyword>
<keyword id="KW-0053">Apoptosis</keyword>
<keyword id="KW-0963">Cytoplasm</keyword>
<keyword id="KW-0378">Hydrolase</keyword>
<keyword id="KW-0597">Phosphoprotein</keyword>
<keyword id="KW-0645">Protease</keyword>
<keyword id="KW-1185">Reference proteome</keyword>
<keyword id="KW-0702">S-nitrosylation</keyword>
<keyword id="KW-0788">Thiol protease</keyword>
<keyword id="KW-0832">Ubl conjugation</keyword>
<keyword id="KW-0865">Zymogen</keyword>
<comment type="function">
    <text evidence="2 3 4">Involved in the activation cascade of caspases responsible for apoptosis execution. At the onset of apoptosis, it proteolytically cleaves poly(ADP-ribose) polymerase PARP1 at a '216-Asp-|-Gly-217' bond. Cleaves and activates sterol regulatory element binding proteins (SREBPs) between the basic helix-loop-helix leucine zipper domain and the membrane attachment domain. Cleaves and activates caspase-6, -7 and -9 (CASP6, CASP7 and CASP9, respectively). Cleaves and inactivates interleukin-18 (IL18) (By similarity). Triggers cell adhesion in sympathetic neurons through RET cleavage (By similarity). Cleaves IL-1 beta between an Asp and an Ala, releasing the mature cytokine which is involved in a variety of inflammatory processes (By similarity). Cleaves and inhibits serine/threonine-protein kinase AKT1 in response to oxidative stress. Acts as an inhibitor of type I interferon production during virus-induced apoptosis by mediating cleavage of antiviral proteins CGAS, IRF3 and MAVS, thereby preventing cytokine overproduction. Also involved in pyroptosis by mediating cleavage and activation of gasdermin-E (GSDME) (By similarity). Cleaves XRCC4 and phospholipid scramblase proteins XKR4, XKR8 and XKR9, leading to promote phosphatidylserine exposure on apoptotic cell surface (By similarity). Cleaves BIRC6 following inhibition of BIRC6-caspase binding by DIABLO/SMAC (By similarity).</text>
</comment>
<comment type="catalytic activity">
    <reaction evidence="2">
        <text>Strict requirement for an Asp residue at positions P1 and P4. It has a preferred cleavage sequence of Asp-Xaa-Xaa-Asp-|- with a hydrophobic amino-acid residue at P2 and a hydrophilic amino-acid residue at P3, although Val or Ala are also accepted at this position.</text>
        <dbReference type="EC" id="3.4.22.56"/>
    </reaction>
</comment>
<comment type="activity regulation">
    <text evidence="2">Inhibited by BIRC6; following inhibition of BIRC6-caspase binding by DIABLO/SMAC, BIRC6 is subjected to caspase cleavage, leading to an increase in active caspases.</text>
</comment>
<comment type="subunit">
    <text evidence="2">Heterotetramer that consists of two anti-parallel arranged heterodimers, each one formed by a 17 kDa (p17) and a 12 kDa (p12) subunit. Interacts with BIRC6/bruce.</text>
</comment>
<comment type="subcellular location">
    <subcellularLocation>
        <location evidence="2">Cytoplasm</location>
    </subcellularLocation>
</comment>
<comment type="PTM">
    <text evidence="2">Cleavage by granzyme B, caspase-6, caspase-8 and caspase-10 generates the two active subunits. Additional processing of the propeptides is likely due to the autocatalytic activity of the activated protease. Active heterodimers between the small subunit of caspase-7 protease and the large subunit of caspase-3 also occur and vice versa.</text>
</comment>
<comment type="PTM">
    <text evidence="2">S-nitrosylated on its catalytic site cysteine in unstimulated cell lines and denitrosylated upon activation of the Fas apoptotic pathway, associated with an increase in intracellular caspase activity. Fas therefore activates caspase-3 not only by inducing the cleavage of the caspase zymogen to its active subunits, but also by stimulating the denitrosylation of its active site thiol.</text>
</comment>
<comment type="PTM">
    <text evidence="2">Ubiquitinated by BIRC6; this activity is inhibited by DIABLO/SMAC.</text>
</comment>
<comment type="similarity">
    <text evidence="5">Belongs to the peptidase C14A family.</text>
</comment>
<gene>
    <name type="primary">CASP3</name>
</gene>
<evidence type="ECO:0000250" key="1">
    <source>
        <dbReference type="UniProtKB" id="P29466"/>
    </source>
</evidence>
<evidence type="ECO:0000250" key="2">
    <source>
        <dbReference type="UniProtKB" id="P42574"/>
    </source>
</evidence>
<evidence type="ECO:0000250" key="3">
    <source>
        <dbReference type="UniProtKB" id="P70677"/>
    </source>
</evidence>
<evidence type="ECO:0000250" key="4">
    <source>
        <dbReference type="UniProtKB" id="Q60431"/>
    </source>
</evidence>
<evidence type="ECO:0000305" key="5"/>
<dbReference type="EC" id="3.4.22.56"/>
<dbReference type="EMBL" id="AB090246">
    <property type="protein sequence ID" value="BAC10589.1"/>
    <property type="molecule type" value="mRNA"/>
</dbReference>
<dbReference type="RefSeq" id="NP_001009338.1">
    <property type="nucleotide sequence ID" value="NM_001009338.1"/>
</dbReference>
<dbReference type="SMR" id="Q8MJU1"/>
<dbReference type="FunCoup" id="Q8MJU1">
    <property type="interactions" value="128"/>
</dbReference>
<dbReference type="STRING" id="9685.ENSFCAP00000031946"/>
<dbReference type="MEROPS" id="C14.003"/>
<dbReference type="PaxDb" id="9685-ENSFCAP00000020966"/>
<dbReference type="GeneID" id="493932"/>
<dbReference type="KEGG" id="fca:493932"/>
<dbReference type="CTD" id="836"/>
<dbReference type="eggNOG" id="KOG3573">
    <property type="taxonomic scope" value="Eukaryota"/>
</dbReference>
<dbReference type="InParanoid" id="Q8MJU1"/>
<dbReference type="OrthoDB" id="6116485at2759"/>
<dbReference type="Proteomes" id="UP000011712">
    <property type="component" value="Unplaced"/>
</dbReference>
<dbReference type="GO" id="GO:0005737">
    <property type="term" value="C:cytoplasm"/>
    <property type="evidence" value="ECO:0000318"/>
    <property type="project" value="GO_Central"/>
</dbReference>
<dbReference type="GO" id="GO:0031264">
    <property type="term" value="C:death-inducing signaling complex"/>
    <property type="evidence" value="ECO:0000318"/>
    <property type="project" value="GO_Central"/>
</dbReference>
<dbReference type="GO" id="GO:0004197">
    <property type="term" value="F:cysteine-type endopeptidase activity"/>
    <property type="evidence" value="ECO:0000250"/>
    <property type="project" value="UniProtKB"/>
</dbReference>
<dbReference type="GO" id="GO:0004175">
    <property type="term" value="F:endopeptidase activity"/>
    <property type="evidence" value="ECO:0000250"/>
    <property type="project" value="UniProtKB"/>
</dbReference>
<dbReference type="GO" id="GO:0008047">
    <property type="term" value="F:enzyme activator activity"/>
    <property type="evidence" value="ECO:0000318"/>
    <property type="project" value="GO_Central"/>
</dbReference>
<dbReference type="GO" id="GO:0006915">
    <property type="term" value="P:apoptotic process"/>
    <property type="evidence" value="ECO:0000318"/>
    <property type="project" value="GO_Central"/>
</dbReference>
<dbReference type="GO" id="GO:0030218">
    <property type="term" value="P:erythrocyte differentiation"/>
    <property type="evidence" value="ECO:0000318"/>
    <property type="project" value="GO_Central"/>
</dbReference>
<dbReference type="GO" id="GO:0097194">
    <property type="term" value="P:execution phase of apoptosis"/>
    <property type="evidence" value="ECO:0000318"/>
    <property type="project" value="GO_Central"/>
</dbReference>
<dbReference type="GO" id="GO:0030216">
    <property type="term" value="P:keratinocyte differentiation"/>
    <property type="evidence" value="ECO:0000318"/>
    <property type="project" value="GO_Central"/>
</dbReference>
<dbReference type="GO" id="GO:0030182">
    <property type="term" value="P:neuron differentiation"/>
    <property type="evidence" value="ECO:0000318"/>
    <property type="project" value="GO_Central"/>
</dbReference>
<dbReference type="GO" id="GO:1902004">
    <property type="term" value="P:positive regulation of amyloid-beta formation"/>
    <property type="evidence" value="ECO:0000250"/>
    <property type="project" value="UniProtKB"/>
</dbReference>
<dbReference type="GO" id="GO:0043525">
    <property type="term" value="P:positive regulation of neuron apoptotic process"/>
    <property type="evidence" value="ECO:0000318"/>
    <property type="project" value="GO_Central"/>
</dbReference>
<dbReference type="GO" id="GO:0006508">
    <property type="term" value="P:proteolysis"/>
    <property type="evidence" value="ECO:0000250"/>
    <property type="project" value="UniProtKB"/>
</dbReference>
<dbReference type="GO" id="GO:0031647">
    <property type="term" value="P:regulation of protein stability"/>
    <property type="evidence" value="ECO:0000250"/>
    <property type="project" value="UniProtKB"/>
</dbReference>
<dbReference type="CDD" id="cd00032">
    <property type="entry name" value="CASc"/>
    <property type="match status" value="1"/>
</dbReference>
<dbReference type="FunFam" id="3.30.70.1470:FF:000002">
    <property type="entry name" value="Caspase-3"/>
    <property type="match status" value="1"/>
</dbReference>
<dbReference type="FunFam" id="3.40.50.1460:FF:000001">
    <property type="entry name" value="Caspase-3 preproprotein"/>
    <property type="match status" value="1"/>
</dbReference>
<dbReference type="Gene3D" id="3.40.50.1460">
    <property type="match status" value="1"/>
</dbReference>
<dbReference type="InterPro" id="IPR029030">
    <property type="entry name" value="Caspase-like_dom_sf"/>
</dbReference>
<dbReference type="InterPro" id="IPR033139">
    <property type="entry name" value="Caspase_cys_AS"/>
</dbReference>
<dbReference type="InterPro" id="IPR016129">
    <property type="entry name" value="Caspase_his_AS"/>
</dbReference>
<dbReference type="InterPro" id="IPR002398">
    <property type="entry name" value="Pept_C14"/>
</dbReference>
<dbReference type="InterPro" id="IPR011600">
    <property type="entry name" value="Pept_C14_caspase"/>
</dbReference>
<dbReference type="InterPro" id="IPR002138">
    <property type="entry name" value="Pept_C14_p10"/>
</dbReference>
<dbReference type="InterPro" id="IPR001309">
    <property type="entry name" value="Pept_C14_p20"/>
</dbReference>
<dbReference type="InterPro" id="IPR015917">
    <property type="entry name" value="Pept_C14A"/>
</dbReference>
<dbReference type="PANTHER" id="PTHR10454">
    <property type="entry name" value="CASPASE"/>
    <property type="match status" value="1"/>
</dbReference>
<dbReference type="PANTHER" id="PTHR10454:SF198">
    <property type="entry name" value="CASPASE-3"/>
    <property type="match status" value="1"/>
</dbReference>
<dbReference type="Pfam" id="PF00656">
    <property type="entry name" value="Peptidase_C14"/>
    <property type="match status" value="1"/>
</dbReference>
<dbReference type="PRINTS" id="PR00376">
    <property type="entry name" value="IL1BCENZYME"/>
</dbReference>
<dbReference type="SMART" id="SM00115">
    <property type="entry name" value="CASc"/>
    <property type="match status" value="1"/>
</dbReference>
<dbReference type="SUPFAM" id="SSF52129">
    <property type="entry name" value="Caspase-like"/>
    <property type="match status" value="1"/>
</dbReference>
<dbReference type="PROSITE" id="PS01122">
    <property type="entry name" value="CASPASE_CYS"/>
    <property type="match status" value="1"/>
</dbReference>
<dbReference type="PROSITE" id="PS01121">
    <property type="entry name" value="CASPASE_HIS"/>
    <property type="match status" value="1"/>
</dbReference>
<dbReference type="PROSITE" id="PS50207">
    <property type="entry name" value="CASPASE_P10"/>
    <property type="match status" value="1"/>
</dbReference>
<dbReference type="PROSITE" id="PS50208">
    <property type="entry name" value="CASPASE_P20"/>
    <property type="match status" value="1"/>
</dbReference>
<accession>Q8MJU1</accession>
<reference key="1">
    <citation type="submission" date="2002-08" db="EMBL/GenBank/DDBJ databases">
        <title>Felis catus mRNA for caspase3.</title>
        <authorList>
            <person name="Yamazaki J."/>
            <person name="Sano J."/>
            <person name="Kano R."/>
            <person name="Hasegawa A."/>
        </authorList>
    </citation>
    <scope>NUCLEOTIDE SEQUENCE [MRNA]</scope>
</reference>
<protein>
    <recommendedName>
        <fullName>Caspase-3</fullName>
        <shortName>CASP-3</shortName>
        <ecNumber>3.4.22.56</ecNumber>
    </recommendedName>
    <component>
        <recommendedName>
            <fullName>Caspase-3 subunit p17</fullName>
        </recommendedName>
    </component>
    <component>
        <recommendedName>
            <fullName>Caspase-3 subunit p12</fullName>
        </recommendedName>
    </component>
</protein>